<protein>
    <recommendedName>
        <fullName evidence="1">Integration host factor subunit alpha</fullName>
        <shortName evidence="1">IHF-alpha</shortName>
    </recommendedName>
</protein>
<organism>
    <name type="scientific">Pseudomonas savastanoi pv. phaseolicola (strain 1448A / Race 6)</name>
    <name type="common">Pseudomonas syringae pv. phaseolicola (strain 1448A / Race 6)</name>
    <dbReference type="NCBI Taxonomy" id="264730"/>
    <lineage>
        <taxon>Bacteria</taxon>
        <taxon>Pseudomonadati</taxon>
        <taxon>Pseudomonadota</taxon>
        <taxon>Gammaproteobacteria</taxon>
        <taxon>Pseudomonadales</taxon>
        <taxon>Pseudomonadaceae</taxon>
        <taxon>Pseudomonas</taxon>
    </lineage>
</organism>
<reference key="1">
    <citation type="journal article" date="2005" name="J. Bacteriol.">
        <title>Whole-genome sequence analysis of Pseudomonas syringae pv. phaseolicola 1448A reveals divergence among pathovars in genes involved in virulence and transposition.</title>
        <authorList>
            <person name="Joardar V."/>
            <person name="Lindeberg M."/>
            <person name="Jackson R.W."/>
            <person name="Selengut J."/>
            <person name="Dodson R."/>
            <person name="Brinkac L.M."/>
            <person name="Daugherty S.C."/>
            <person name="DeBoy R.T."/>
            <person name="Durkin A.S."/>
            <person name="Gwinn Giglio M."/>
            <person name="Madupu R."/>
            <person name="Nelson W.C."/>
            <person name="Rosovitz M.J."/>
            <person name="Sullivan S.A."/>
            <person name="Crabtree J."/>
            <person name="Creasy T."/>
            <person name="Davidsen T.M."/>
            <person name="Haft D.H."/>
            <person name="Zafar N."/>
            <person name="Zhou L."/>
            <person name="Halpin R."/>
            <person name="Holley T."/>
            <person name="Khouri H.M."/>
            <person name="Feldblyum T.V."/>
            <person name="White O."/>
            <person name="Fraser C.M."/>
            <person name="Chatterjee A.K."/>
            <person name="Cartinhour S."/>
            <person name="Schneider D."/>
            <person name="Mansfield J.W."/>
            <person name="Collmer A."/>
            <person name="Buell R."/>
        </authorList>
    </citation>
    <scope>NUCLEOTIDE SEQUENCE [LARGE SCALE GENOMIC DNA]</scope>
    <source>
        <strain>1448A / Race 6</strain>
    </source>
</reference>
<dbReference type="EMBL" id="CP000058">
    <property type="protein sequence ID" value="AAZ37492.1"/>
    <property type="molecule type" value="Genomic_DNA"/>
</dbReference>
<dbReference type="RefSeq" id="WP_002553164.1">
    <property type="nucleotide sequence ID" value="NC_005773.3"/>
</dbReference>
<dbReference type="SMR" id="Q48JR7"/>
<dbReference type="GeneID" id="98284088"/>
<dbReference type="KEGG" id="psp:PSPPH_2141"/>
<dbReference type="eggNOG" id="COG0776">
    <property type="taxonomic scope" value="Bacteria"/>
</dbReference>
<dbReference type="HOGENOM" id="CLU_105066_1_3_6"/>
<dbReference type="Proteomes" id="UP000000551">
    <property type="component" value="Chromosome"/>
</dbReference>
<dbReference type="GO" id="GO:0005829">
    <property type="term" value="C:cytosol"/>
    <property type="evidence" value="ECO:0007669"/>
    <property type="project" value="TreeGrafter"/>
</dbReference>
<dbReference type="GO" id="GO:0003677">
    <property type="term" value="F:DNA binding"/>
    <property type="evidence" value="ECO:0007669"/>
    <property type="project" value="UniProtKB-UniRule"/>
</dbReference>
<dbReference type="GO" id="GO:0030527">
    <property type="term" value="F:structural constituent of chromatin"/>
    <property type="evidence" value="ECO:0007669"/>
    <property type="project" value="InterPro"/>
</dbReference>
<dbReference type="GO" id="GO:0006310">
    <property type="term" value="P:DNA recombination"/>
    <property type="evidence" value="ECO:0007669"/>
    <property type="project" value="UniProtKB-UniRule"/>
</dbReference>
<dbReference type="GO" id="GO:0009893">
    <property type="term" value="P:positive regulation of metabolic process"/>
    <property type="evidence" value="ECO:0007669"/>
    <property type="project" value="UniProtKB-ARBA"/>
</dbReference>
<dbReference type="GO" id="GO:0006355">
    <property type="term" value="P:regulation of DNA-templated transcription"/>
    <property type="evidence" value="ECO:0007669"/>
    <property type="project" value="UniProtKB-UniRule"/>
</dbReference>
<dbReference type="GO" id="GO:0006417">
    <property type="term" value="P:regulation of translation"/>
    <property type="evidence" value="ECO:0007669"/>
    <property type="project" value="UniProtKB-UniRule"/>
</dbReference>
<dbReference type="CDD" id="cd13835">
    <property type="entry name" value="IHF_A"/>
    <property type="match status" value="1"/>
</dbReference>
<dbReference type="FunFam" id="4.10.520.10:FF:000002">
    <property type="entry name" value="Integration host factor subunit alpha"/>
    <property type="match status" value="1"/>
</dbReference>
<dbReference type="Gene3D" id="4.10.520.10">
    <property type="entry name" value="IHF-like DNA-binding proteins"/>
    <property type="match status" value="1"/>
</dbReference>
<dbReference type="HAMAP" id="MF_00380">
    <property type="entry name" value="IHF_alpha"/>
    <property type="match status" value="1"/>
</dbReference>
<dbReference type="InterPro" id="IPR000119">
    <property type="entry name" value="Hist_DNA-bd"/>
</dbReference>
<dbReference type="InterPro" id="IPR020816">
    <property type="entry name" value="Histone-like_DNA-bd_CS"/>
</dbReference>
<dbReference type="InterPro" id="IPR010992">
    <property type="entry name" value="IHF-like_DNA-bd_dom_sf"/>
</dbReference>
<dbReference type="InterPro" id="IPR005684">
    <property type="entry name" value="IHF_alpha"/>
</dbReference>
<dbReference type="NCBIfam" id="TIGR00987">
    <property type="entry name" value="himA"/>
    <property type="match status" value="1"/>
</dbReference>
<dbReference type="NCBIfam" id="NF001401">
    <property type="entry name" value="PRK00285.1"/>
    <property type="match status" value="1"/>
</dbReference>
<dbReference type="PANTHER" id="PTHR33175">
    <property type="entry name" value="DNA-BINDING PROTEIN HU"/>
    <property type="match status" value="1"/>
</dbReference>
<dbReference type="PANTHER" id="PTHR33175:SF2">
    <property type="entry name" value="INTEGRATION HOST FACTOR SUBUNIT ALPHA"/>
    <property type="match status" value="1"/>
</dbReference>
<dbReference type="Pfam" id="PF00216">
    <property type="entry name" value="Bac_DNA_binding"/>
    <property type="match status" value="1"/>
</dbReference>
<dbReference type="PRINTS" id="PR01727">
    <property type="entry name" value="DNABINDINGHU"/>
</dbReference>
<dbReference type="SMART" id="SM00411">
    <property type="entry name" value="BHL"/>
    <property type="match status" value="1"/>
</dbReference>
<dbReference type="SUPFAM" id="SSF47729">
    <property type="entry name" value="IHF-like DNA-binding proteins"/>
    <property type="match status" value="1"/>
</dbReference>
<dbReference type="PROSITE" id="PS00045">
    <property type="entry name" value="HISTONE_LIKE"/>
    <property type="match status" value="1"/>
</dbReference>
<accession>Q48JR7</accession>
<name>IHFA_PSE14</name>
<comment type="function">
    <text evidence="1">This protein is one of the two subunits of integration host factor, a specific DNA-binding protein that functions in genetic recombination as well as in transcriptional and translational control.</text>
</comment>
<comment type="subunit">
    <text evidence="1">Heterodimer of an alpha and a beta chain.</text>
</comment>
<comment type="similarity">
    <text evidence="1">Belongs to the bacterial histone-like protein family.</text>
</comment>
<sequence length="100" mass="11476">MGALTKAEMAERLYEELGLNKREAKELVELFFEEIRHALEDNEQVKLSGFGNFDLRDKRQRPGRNPKTGEEIPITARRVVTFRPGQKLKARVEAYAGTKS</sequence>
<feature type="chain" id="PRO_0000277760" description="Integration host factor subunit alpha">
    <location>
        <begin position="1"/>
        <end position="100"/>
    </location>
</feature>
<feature type="region of interest" description="Disordered" evidence="2">
    <location>
        <begin position="54"/>
        <end position="73"/>
    </location>
</feature>
<gene>
    <name evidence="1" type="primary">ihfA</name>
    <name evidence="1" type="synonym">himA</name>
    <name type="ordered locus">PSPPH_2141</name>
</gene>
<evidence type="ECO:0000255" key="1">
    <source>
        <dbReference type="HAMAP-Rule" id="MF_00380"/>
    </source>
</evidence>
<evidence type="ECO:0000256" key="2">
    <source>
        <dbReference type="SAM" id="MobiDB-lite"/>
    </source>
</evidence>
<proteinExistence type="inferred from homology"/>
<keyword id="KW-0233">DNA recombination</keyword>
<keyword id="KW-0238">DNA-binding</keyword>
<keyword id="KW-0804">Transcription</keyword>
<keyword id="KW-0805">Transcription regulation</keyword>
<keyword id="KW-0810">Translation regulation</keyword>